<dbReference type="EC" id="6.3.5.2" evidence="1"/>
<dbReference type="EMBL" id="CP000969">
    <property type="protein sequence ID" value="ACB09351.1"/>
    <property type="molecule type" value="Genomic_DNA"/>
</dbReference>
<dbReference type="RefSeq" id="WP_004082366.1">
    <property type="nucleotide sequence ID" value="NC_010483.1"/>
</dbReference>
<dbReference type="SMR" id="B1LAK3"/>
<dbReference type="KEGG" id="trq:TRQ2_1001"/>
<dbReference type="HOGENOM" id="CLU_014340_0_5_0"/>
<dbReference type="UniPathway" id="UPA00189">
    <property type="reaction ID" value="UER00296"/>
</dbReference>
<dbReference type="Proteomes" id="UP000001687">
    <property type="component" value="Chromosome"/>
</dbReference>
<dbReference type="GO" id="GO:0005829">
    <property type="term" value="C:cytosol"/>
    <property type="evidence" value="ECO:0007669"/>
    <property type="project" value="TreeGrafter"/>
</dbReference>
<dbReference type="GO" id="GO:0005524">
    <property type="term" value="F:ATP binding"/>
    <property type="evidence" value="ECO:0007669"/>
    <property type="project" value="UniProtKB-UniRule"/>
</dbReference>
<dbReference type="GO" id="GO:0003921">
    <property type="term" value="F:GMP synthase activity"/>
    <property type="evidence" value="ECO:0007669"/>
    <property type="project" value="InterPro"/>
</dbReference>
<dbReference type="CDD" id="cd01742">
    <property type="entry name" value="GATase1_GMP_Synthase"/>
    <property type="match status" value="1"/>
</dbReference>
<dbReference type="CDD" id="cd01997">
    <property type="entry name" value="GMP_synthase_C"/>
    <property type="match status" value="1"/>
</dbReference>
<dbReference type="FunFam" id="3.30.300.10:FF:000002">
    <property type="entry name" value="GMP synthase [glutamine-hydrolyzing]"/>
    <property type="match status" value="1"/>
</dbReference>
<dbReference type="FunFam" id="3.40.50.620:FF:000001">
    <property type="entry name" value="GMP synthase [glutamine-hydrolyzing]"/>
    <property type="match status" value="1"/>
</dbReference>
<dbReference type="FunFam" id="3.40.50.880:FF:000001">
    <property type="entry name" value="GMP synthase [glutamine-hydrolyzing]"/>
    <property type="match status" value="1"/>
</dbReference>
<dbReference type="Gene3D" id="3.30.300.10">
    <property type="match status" value="1"/>
</dbReference>
<dbReference type="Gene3D" id="3.40.50.880">
    <property type="match status" value="1"/>
</dbReference>
<dbReference type="Gene3D" id="3.40.50.620">
    <property type="entry name" value="HUPs"/>
    <property type="match status" value="1"/>
</dbReference>
<dbReference type="HAMAP" id="MF_00344">
    <property type="entry name" value="GMP_synthase"/>
    <property type="match status" value="1"/>
</dbReference>
<dbReference type="InterPro" id="IPR048267">
    <property type="entry name" value="Arginosuc_syn_N"/>
</dbReference>
<dbReference type="InterPro" id="IPR029062">
    <property type="entry name" value="Class_I_gatase-like"/>
</dbReference>
<dbReference type="InterPro" id="IPR017926">
    <property type="entry name" value="GATASE"/>
</dbReference>
<dbReference type="InterPro" id="IPR001674">
    <property type="entry name" value="GMP_synth_C"/>
</dbReference>
<dbReference type="InterPro" id="IPR004739">
    <property type="entry name" value="GMP_synth_GATase"/>
</dbReference>
<dbReference type="InterPro" id="IPR022955">
    <property type="entry name" value="GMP_synthase"/>
</dbReference>
<dbReference type="InterPro" id="IPR025777">
    <property type="entry name" value="GMPS_ATP_PPase_dom"/>
</dbReference>
<dbReference type="InterPro" id="IPR014729">
    <property type="entry name" value="Rossmann-like_a/b/a_fold"/>
</dbReference>
<dbReference type="NCBIfam" id="TIGR00884">
    <property type="entry name" value="guaA_Cterm"/>
    <property type="match status" value="1"/>
</dbReference>
<dbReference type="NCBIfam" id="TIGR00888">
    <property type="entry name" value="guaA_Nterm"/>
    <property type="match status" value="1"/>
</dbReference>
<dbReference type="NCBIfam" id="NF000848">
    <property type="entry name" value="PRK00074.1"/>
    <property type="match status" value="1"/>
</dbReference>
<dbReference type="PANTHER" id="PTHR11922:SF2">
    <property type="entry name" value="GMP SYNTHASE [GLUTAMINE-HYDROLYZING]"/>
    <property type="match status" value="1"/>
</dbReference>
<dbReference type="PANTHER" id="PTHR11922">
    <property type="entry name" value="GMP SYNTHASE-RELATED"/>
    <property type="match status" value="1"/>
</dbReference>
<dbReference type="Pfam" id="PF00764">
    <property type="entry name" value="Arginosuc_synth"/>
    <property type="match status" value="1"/>
</dbReference>
<dbReference type="Pfam" id="PF00117">
    <property type="entry name" value="GATase"/>
    <property type="match status" value="1"/>
</dbReference>
<dbReference type="Pfam" id="PF00958">
    <property type="entry name" value="GMP_synt_C"/>
    <property type="match status" value="1"/>
</dbReference>
<dbReference type="PRINTS" id="PR00096">
    <property type="entry name" value="GATASE"/>
</dbReference>
<dbReference type="SUPFAM" id="SSF52402">
    <property type="entry name" value="Adenine nucleotide alpha hydrolases-like"/>
    <property type="match status" value="1"/>
</dbReference>
<dbReference type="SUPFAM" id="SSF52317">
    <property type="entry name" value="Class I glutamine amidotransferase-like"/>
    <property type="match status" value="1"/>
</dbReference>
<dbReference type="SUPFAM" id="SSF54810">
    <property type="entry name" value="GMP synthetase C-terminal dimerisation domain"/>
    <property type="match status" value="1"/>
</dbReference>
<dbReference type="PROSITE" id="PS51273">
    <property type="entry name" value="GATASE_TYPE_1"/>
    <property type="match status" value="1"/>
</dbReference>
<dbReference type="PROSITE" id="PS51553">
    <property type="entry name" value="GMPS_ATP_PPASE"/>
    <property type="match status" value="1"/>
</dbReference>
<proteinExistence type="inferred from homology"/>
<sequence>MVLVVDYGSQYSRLITRRIRENEVYSEVVFPDDKVDLSKVDAVILSGGPRSVYEEDAPKLPEWFQEYKGPVLAICYGMQLIVKELGGEVRRGRGEYGRTLVELSRDPIFEGIPEKVHVWMSHGDEVVRLPEGFHPIAVSETGVIAAATDGKRFWLLQFHPEVHHTEYGDRMISNFLFNVCKLEKNWKIGDLVEEKIRHIKETIGNKKAILALSGGVDSSVAAVLVHRAIGKNLVCVFVDHGLLRKNEREEVERVFKEHFDMNLVVVDARKRFLEKLRGVTDPEKKRKIIGEEFIRVFEEEAKKHDVEFLVQGTIYSDVIESAASGKTTAKIKSHHNVGGLPEKMNLKLVEPLRDLFKDEVRKVGKYLGIPDRIINRHPFPGPGLAVRVLGEVTEEKLEILREADYIFIETLRKHDYYDKVWQAFAVLLPIKSVGVKGDARAYEYVVALRAVNSVEGMTADWSRIPHDILDEAARRITREVKGVGRVVYDITSKPPATIEWE</sequence>
<protein>
    <recommendedName>
        <fullName evidence="1">GMP synthase [glutamine-hydrolyzing]</fullName>
        <ecNumber evidence="1">6.3.5.2</ecNumber>
    </recommendedName>
    <alternativeName>
        <fullName evidence="1">GMP synthetase</fullName>
    </alternativeName>
    <alternativeName>
        <fullName evidence="1">Glutamine amidotransferase</fullName>
    </alternativeName>
</protein>
<comment type="function">
    <text evidence="1">Catalyzes the synthesis of GMP from XMP.</text>
</comment>
<comment type="catalytic activity">
    <reaction evidence="1">
        <text>XMP + L-glutamine + ATP + H2O = GMP + L-glutamate + AMP + diphosphate + 2 H(+)</text>
        <dbReference type="Rhea" id="RHEA:11680"/>
        <dbReference type="ChEBI" id="CHEBI:15377"/>
        <dbReference type="ChEBI" id="CHEBI:15378"/>
        <dbReference type="ChEBI" id="CHEBI:29985"/>
        <dbReference type="ChEBI" id="CHEBI:30616"/>
        <dbReference type="ChEBI" id="CHEBI:33019"/>
        <dbReference type="ChEBI" id="CHEBI:57464"/>
        <dbReference type="ChEBI" id="CHEBI:58115"/>
        <dbReference type="ChEBI" id="CHEBI:58359"/>
        <dbReference type="ChEBI" id="CHEBI:456215"/>
        <dbReference type="EC" id="6.3.5.2"/>
    </reaction>
</comment>
<comment type="pathway">
    <text evidence="1">Purine metabolism; GMP biosynthesis; GMP from XMP (L-Gln route): step 1/1.</text>
</comment>
<comment type="subunit">
    <text evidence="1">Homodimer.</text>
</comment>
<keyword id="KW-0067">ATP-binding</keyword>
<keyword id="KW-0315">Glutamine amidotransferase</keyword>
<keyword id="KW-0332">GMP biosynthesis</keyword>
<keyword id="KW-0436">Ligase</keyword>
<keyword id="KW-0547">Nucleotide-binding</keyword>
<keyword id="KW-0658">Purine biosynthesis</keyword>
<accession>B1LAK3</accession>
<organism>
    <name type="scientific">Thermotoga sp. (strain RQ2)</name>
    <dbReference type="NCBI Taxonomy" id="126740"/>
    <lineage>
        <taxon>Bacteria</taxon>
        <taxon>Thermotogati</taxon>
        <taxon>Thermotogota</taxon>
        <taxon>Thermotogae</taxon>
        <taxon>Thermotogales</taxon>
        <taxon>Thermotogaceae</taxon>
        <taxon>Thermotoga</taxon>
    </lineage>
</organism>
<evidence type="ECO:0000255" key="1">
    <source>
        <dbReference type="HAMAP-Rule" id="MF_00344"/>
    </source>
</evidence>
<reference key="1">
    <citation type="journal article" date="2011" name="J. Bacteriol.">
        <title>Genome sequence of Thermotoga sp. strain RQ2, a hyperthermophilic bacterium isolated from a geothermally heated region of the seafloor near Ribeira Quente, the Azores.</title>
        <authorList>
            <person name="Swithers K.S."/>
            <person name="DiPippo J.L."/>
            <person name="Bruce D.C."/>
            <person name="Detter C."/>
            <person name="Tapia R."/>
            <person name="Han S."/>
            <person name="Saunders E."/>
            <person name="Goodwin L.A."/>
            <person name="Han J."/>
            <person name="Woyke T."/>
            <person name="Pitluck S."/>
            <person name="Pennacchio L."/>
            <person name="Nolan M."/>
            <person name="Mikhailova N."/>
            <person name="Lykidis A."/>
            <person name="Land M.L."/>
            <person name="Brettin T."/>
            <person name="Stetter K.O."/>
            <person name="Nelson K.E."/>
            <person name="Gogarten J.P."/>
            <person name="Noll K.M."/>
        </authorList>
    </citation>
    <scope>NUCLEOTIDE SEQUENCE [LARGE SCALE GENOMIC DNA]</scope>
    <source>
        <strain>RQ2</strain>
    </source>
</reference>
<name>GUAA_THESQ</name>
<gene>
    <name evidence="1" type="primary">guaA</name>
    <name type="ordered locus">TRQ2_1001</name>
</gene>
<feature type="chain" id="PRO_1000120447" description="GMP synthase [glutamine-hydrolyzing]">
    <location>
        <begin position="1"/>
        <end position="501"/>
    </location>
</feature>
<feature type="domain" description="Glutamine amidotransferase type-1" evidence="1">
    <location>
        <begin position="1"/>
        <end position="185"/>
    </location>
</feature>
<feature type="domain" description="GMPS ATP-PPase" evidence="1">
    <location>
        <begin position="186"/>
        <end position="376"/>
    </location>
</feature>
<feature type="active site" description="Nucleophile" evidence="1">
    <location>
        <position position="75"/>
    </location>
</feature>
<feature type="active site" evidence="1">
    <location>
        <position position="159"/>
    </location>
</feature>
<feature type="active site" evidence="1">
    <location>
        <position position="161"/>
    </location>
</feature>
<feature type="binding site" evidence="1">
    <location>
        <begin position="213"/>
        <end position="219"/>
    </location>
    <ligand>
        <name>ATP</name>
        <dbReference type="ChEBI" id="CHEBI:30616"/>
    </ligand>
</feature>